<name>CD9_CHLAE</name>
<keyword id="KW-0130">Cell adhesion</keyword>
<keyword id="KW-1003">Cell membrane</keyword>
<keyword id="KW-1015">Disulfide bond</keyword>
<keyword id="KW-0278">Fertilization</keyword>
<keyword id="KW-0325">Glycoprotein</keyword>
<keyword id="KW-0449">Lipoprotein</keyword>
<keyword id="KW-0472">Membrane</keyword>
<keyword id="KW-0564">Palmitate</keyword>
<keyword id="KW-0964">Secreted</keyword>
<keyword id="KW-0812">Transmembrane</keyword>
<keyword id="KW-1133">Transmembrane helix</keyword>
<reference key="1">
    <citation type="journal article" date="1992" name="J. Cell Biol.">
        <title>The 27-kD diphtheria toxin receptor-associated protein (DRAP27) from vero cells is the monkey homologue of human CD9 antigen: expression of DRAP27 elevates the number of diphtheria toxin receptors on toxin-sensitive cells.</title>
        <authorList>
            <person name="Mitamura T."/>
            <person name="Iwamoto R."/>
            <person name="Umata T."/>
            <person name="Yomo T."/>
            <person name="Urabe I."/>
            <person name="Tsuneoka M."/>
            <person name="Mekada E."/>
        </authorList>
    </citation>
    <scope>NUCLEOTIDE SEQUENCE [MRNA]</scope>
    <scope>SUBCELLULAR LOCATION</scope>
</reference>
<comment type="function">
    <text evidence="1 2">Integral membrane protein associated with integrins, which regulates different processes, such as sperm-egg fusion, platelet activation and aggregation, and cell adhesion (By similarity). Present at the cell surface of oocytes and plays a key role in sperm-egg fusion, possibly by organizing multiprotein complexes and the morphology of the membrane required for the fusion (By similarity). In myoblasts, associates with CD81 and PTGFRN and inhibits myotube fusion during muscle regeneration (By similarity). In macrophages, associates with CD81 and beta-1 and beta-2 integrins, and prevents macrophage fusion into multinucleated giant cells specialized in ingesting complement-opsonized large particles (By similarity). Also prevents the fusion between mononuclear cell progenitors into osteoclasts in charge of bone resorption (By similarity). Acts as a receptor for PSG17 (By similarity). Involved in platelet activation and aggregation (By similarity). Regulates paranodal junction formation (By similarity). Involved in cell adhesion, cell motility and tumor metastasis (By similarity).</text>
</comment>
<comment type="subunit">
    <text evidence="1 2">Forms both disulfide-linked homodimers and higher homooligomers as well as heterooligomers with other members of the tetraspanin family. Interacts (via the second extracellular domain) with integrin ITGAV:ITGB3 (By similarity). Interacts with integrin ITGA6:ITGB1; interaction takes place in oocytes and is involved in sperm-egg fusion (By similarity). Part of integrin-tetraspanin complexes composed of CD81, beta-1 and beta-2 integrins in the membrane of monocyte/macrophages (By similarity). Interacts with CD63; identified in a complex with CD63 and ITGB3. Associates with CR2/CD21 and with PTGFRN/CD9P1. Part of a complex composed of CD9, CD81, PTGFRN and IGSF8 (By similarity). Interacts directly with IGSF8. Interacts with PDPN; this interaction is homophilic and attenuates platelet aggregation and pulmonary metastasis induced by PDPN. Interacts (on T cell side) with CD81 at immunological synapses between antigen-presenting cells and T cells (By similarity).</text>
</comment>
<comment type="subcellular location">
    <subcellularLocation>
        <location evidence="5">Cell membrane</location>
        <topology evidence="5">Multi-pass membrane protein</topology>
    </subcellularLocation>
    <subcellularLocation>
        <location evidence="5">Membrane</location>
        <topology evidence="5">Multi-pass membrane protein</topology>
    </subcellularLocation>
    <subcellularLocation>
        <location evidence="2">Secreted</location>
        <location evidence="2">Extracellular exosome</location>
    </subcellularLocation>
    <text evidence="2">Present at the cell surface of oocytes. Accumulates in the adhesion area between the sperm and egg following interaction between IZUMO1 and its receptor IZUMO1R/JUNO.</text>
</comment>
<comment type="PTM">
    <text evidence="1">Palmitoylated at a low, basal level in unstimulated platelets. The level of palmitoylation increases when platelets are activated by thrombin (in vitro). The protein exists in three forms with molecular masses between 22 and 27 kDa, and is known to carry covalently linked fatty acids. Palmitoylation by ZDHHC2 regulates CD9 expression, association with other tetraspanin family proteins and function in cell adhesion.</text>
</comment>
<comment type="similarity">
    <text evidence="7">Belongs to the tetraspanin (TM4SF) family.</text>
</comment>
<feature type="chain" id="PRO_0000219203" description="CD9 antigen">
    <location>
        <begin position="1"/>
        <end position="228"/>
    </location>
</feature>
<feature type="topological domain" description="Cytoplasmic" evidence="3">
    <location>
        <begin position="1"/>
        <end position="12"/>
    </location>
</feature>
<feature type="transmembrane region" description="Helical" evidence="3">
    <location>
        <begin position="13"/>
        <end position="33"/>
    </location>
</feature>
<feature type="topological domain" description="Extracellular" evidence="3">
    <location>
        <begin position="34"/>
        <end position="55"/>
    </location>
</feature>
<feature type="transmembrane region" description="Helical" evidence="3">
    <location>
        <begin position="56"/>
        <end position="76"/>
    </location>
</feature>
<feature type="topological domain" description="Cytoplasmic" evidence="3">
    <location>
        <begin position="77"/>
        <end position="87"/>
    </location>
</feature>
<feature type="transmembrane region" description="Helical" evidence="3">
    <location>
        <begin position="88"/>
        <end position="111"/>
    </location>
</feature>
<feature type="topological domain" description="Extracellular" evidence="3">
    <location>
        <begin position="112"/>
        <end position="195"/>
    </location>
</feature>
<feature type="transmembrane region" description="Helical" evidence="3">
    <location>
        <begin position="196"/>
        <end position="221"/>
    </location>
</feature>
<feature type="topological domain" description="Cytoplasmic" evidence="3">
    <location>
        <begin position="222"/>
        <end position="228"/>
    </location>
</feature>
<feature type="lipid moiety-binding region" description="S-palmitoyl cysteine" evidence="1">
    <location>
        <position position="9"/>
    </location>
</feature>
<feature type="lipid moiety-binding region" description="S-palmitoyl cysteine" evidence="1">
    <location>
        <position position="78"/>
    </location>
</feature>
<feature type="lipid moiety-binding region" description="S-palmitoyl cysteine" evidence="1">
    <location>
        <position position="79"/>
    </location>
</feature>
<feature type="lipid moiety-binding region" description="S-palmitoyl cysteine" evidence="1">
    <location>
        <position position="87"/>
    </location>
</feature>
<feature type="lipid moiety-binding region" description="S-palmitoyl cysteine" evidence="1">
    <location>
        <position position="218"/>
    </location>
</feature>
<feature type="lipid moiety-binding region" description="S-palmitoyl cysteine" evidence="1">
    <location>
        <position position="219"/>
    </location>
</feature>
<feature type="glycosylation site" description="N-linked (GlcNAc...) asparagine" evidence="3">
    <location>
        <position position="52"/>
    </location>
</feature>
<feature type="glycosylation site" description="N-linked (GlcNAc...) asparagine" evidence="3">
    <location>
        <position position="53"/>
    </location>
</feature>
<feature type="disulfide bond" evidence="4">
    <location>
        <begin position="152"/>
        <end position="181"/>
    </location>
</feature>
<feature type="disulfide bond" evidence="4">
    <location>
        <begin position="153"/>
        <end position="167"/>
    </location>
</feature>
<dbReference type="EMBL" id="D10726">
    <property type="protein sequence ID" value="BAA01569.1"/>
    <property type="molecule type" value="mRNA"/>
</dbReference>
<dbReference type="PIR" id="A42929">
    <property type="entry name" value="A42929"/>
</dbReference>
<dbReference type="SMR" id="P30409"/>
<dbReference type="DIP" id="DIP-181N"/>
<dbReference type="IntAct" id="P30409">
    <property type="interactions" value="1"/>
</dbReference>
<dbReference type="MINT" id="P30409"/>
<dbReference type="GlyCosmos" id="P30409">
    <property type="glycosylation" value="2 sites, No reported glycans"/>
</dbReference>
<dbReference type="SwissPalm" id="P30409"/>
<dbReference type="GO" id="GO:0005576">
    <property type="term" value="C:extracellular region"/>
    <property type="evidence" value="ECO:0007669"/>
    <property type="project" value="UniProtKB-SubCell"/>
</dbReference>
<dbReference type="GO" id="GO:0005886">
    <property type="term" value="C:plasma membrane"/>
    <property type="evidence" value="ECO:0000250"/>
    <property type="project" value="UniProtKB"/>
</dbReference>
<dbReference type="GO" id="GO:0005178">
    <property type="term" value="F:integrin binding"/>
    <property type="evidence" value="ECO:0000250"/>
    <property type="project" value="UniProtKB"/>
</dbReference>
<dbReference type="GO" id="GO:0007155">
    <property type="term" value="P:cell adhesion"/>
    <property type="evidence" value="ECO:0000250"/>
    <property type="project" value="UniProtKB"/>
</dbReference>
<dbReference type="GO" id="GO:0007342">
    <property type="term" value="P:fusion of sperm to egg plasma membrane involved in single fertilization"/>
    <property type="evidence" value="ECO:0000250"/>
    <property type="project" value="UniProtKB"/>
</dbReference>
<dbReference type="GO" id="GO:0014905">
    <property type="term" value="P:myoblast fusion involved in skeletal muscle regeneration"/>
    <property type="evidence" value="ECO:0000250"/>
    <property type="project" value="UniProtKB"/>
</dbReference>
<dbReference type="GO" id="GO:0090331">
    <property type="term" value="P:negative regulation of platelet aggregation"/>
    <property type="evidence" value="ECO:0000250"/>
    <property type="project" value="UniProtKB"/>
</dbReference>
<dbReference type="GO" id="GO:0030913">
    <property type="term" value="P:paranodal junction assembly"/>
    <property type="evidence" value="ECO:0000250"/>
    <property type="project" value="UniProtKB"/>
</dbReference>
<dbReference type="GO" id="GO:0007338">
    <property type="term" value="P:single fertilization"/>
    <property type="evidence" value="ECO:0000250"/>
    <property type="project" value="UniProtKB"/>
</dbReference>
<dbReference type="GO" id="GO:0035036">
    <property type="term" value="P:sperm-egg recognition"/>
    <property type="evidence" value="ECO:0000250"/>
    <property type="project" value="UniProtKB"/>
</dbReference>
<dbReference type="CDD" id="cd03152">
    <property type="entry name" value="CD9_LEL"/>
    <property type="match status" value="1"/>
</dbReference>
<dbReference type="FunFam" id="1.10.1450.10:FF:000016">
    <property type="entry name" value="Tetraspanin"/>
    <property type="match status" value="1"/>
</dbReference>
<dbReference type="Gene3D" id="1.10.1450.10">
    <property type="entry name" value="Tetraspanin"/>
    <property type="match status" value="1"/>
</dbReference>
<dbReference type="InterPro" id="IPR042055">
    <property type="entry name" value="CD9_LEL"/>
</dbReference>
<dbReference type="InterPro" id="IPR018499">
    <property type="entry name" value="Tetraspanin/Peripherin"/>
</dbReference>
<dbReference type="InterPro" id="IPR000301">
    <property type="entry name" value="Tetraspanin_animals"/>
</dbReference>
<dbReference type="InterPro" id="IPR018503">
    <property type="entry name" value="Tetraspanin_CS"/>
</dbReference>
<dbReference type="InterPro" id="IPR008952">
    <property type="entry name" value="Tetraspanin_EC2_sf"/>
</dbReference>
<dbReference type="PANTHER" id="PTHR19282:SF163">
    <property type="entry name" value="CD9 ANTIGEN"/>
    <property type="match status" value="1"/>
</dbReference>
<dbReference type="PANTHER" id="PTHR19282">
    <property type="entry name" value="TETRASPANIN"/>
    <property type="match status" value="1"/>
</dbReference>
<dbReference type="Pfam" id="PF00335">
    <property type="entry name" value="Tetraspanin"/>
    <property type="match status" value="1"/>
</dbReference>
<dbReference type="PIRSF" id="PIRSF002419">
    <property type="entry name" value="Tetraspanin"/>
    <property type="match status" value="1"/>
</dbReference>
<dbReference type="PRINTS" id="PR00259">
    <property type="entry name" value="TMFOUR"/>
</dbReference>
<dbReference type="SUPFAM" id="SSF48652">
    <property type="entry name" value="Tetraspanin"/>
    <property type="match status" value="1"/>
</dbReference>
<dbReference type="PROSITE" id="PS00421">
    <property type="entry name" value="TM4_1"/>
    <property type="match status" value="1"/>
</dbReference>
<gene>
    <name evidence="1" type="primary">CD9</name>
</gene>
<proteinExistence type="evidence at transcript level"/>
<organism>
    <name type="scientific">Chlorocebus aethiops</name>
    <name type="common">Green monkey</name>
    <name type="synonym">Cercopithecus aethiops</name>
    <dbReference type="NCBI Taxonomy" id="9534"/>
    <lineage>
        <taxon>Eukaryota</taxon>
        <taxon>Metazoa</taxon>
        <taxon>Chordata</taxon>
        <taxon>Craniata</taxon>
        <taxon>Vertebrata</taxon>
        <taxon>Euteleostomi</taxon>
        <taxon>Mammalia</taxon>
        <taxon>Eutheria</taxon>
        <taxon>Euarchontoglires</taxon>
        <taxon>Primates</taxon>
        <taxon>Haplorrhini</taxon>
        <taxon>Catarrhini</taxon>
        <taxon>Cercopithecidae</taxon>
        <taxon>Cercopithecinae</taxon>
        <taxon>Chlorocebus</taxon>
    </lineage>
</organism>
<protein>
    <recommendedName>
        <fullName evidence="1">CD9 antigen</fullName>
    </recommendedName>
    <alternativeName>
        <fullName evidence="6">27 kDa diphtheria toxin receptor-associated protein</fullName>
        <shortName evidence="6">DRAP27</shortName>
    </alternativeName>
    <cdAntigenName evidence="1">CD9</cdAntigenName>
</protein>
<sequence length="228" mass="25431">MPVKGGTKCIKYLLFGFNFIFWLAGIAVLAIGLWLRFDSQTKSIFEQETNNNNSSFYTGVYILIGAGALMMLVGFLGCCGAVQESQCMLGLFFGFLLVIFAIEIAAAIWGYSHKDEVIKEVQEFYKDTYNKLKTKDEPQRETLKAIHYALDCCGLAGGVEQFISDICPKKDVLETFTIKSCPDAIKEVFDNKFHIIGAVGIGIAVVMIFGMIFSMILCCAIRRNREMV</sequence>
<accession>P30409</accession>
<evidence type="ECO:0000250" key="1">
    <source>
        <dbReference type="UniProtKB" id="P21926"/>
    </source>
</evidence>
<evidence type="ECO:0000250" key="2">
    <source>
        <dbReference type="UniProtKB" id="P40240"/>
    </source>
</evidence>
<evidence type="ECO:0000255" key="3"/>
<evidence type="ECO:0000255" key="4">
    <source>
        <dbReference type="PROSITE-ProRule" id="PRU00114"/>
    </source>
</evidence>
<evidence type="ECO:0000269" key="5">
    <source>
    </source>
</evidence>
<evidence type="ECO:0000303" key="6">
    <source>
    </source>
</evidence>
<evidence type="ECO:0000305" key="7"/>